<evidence type="ECO:0000250" key="1"/>
<evidence type="ECO:0000255" key="2"/>
<evidence type="ECO:0000256" key="3">
    <source>
        <dbReference type="SAM" id="MobiDB-lite"/>
    </source>
</evidence>
<evidence type="ECO:0000305" key="4"/>
<organism>
    <name type="scientific">Salmo salar</name>
    <name type="common">Atlantic salmon</name>
    <dbReference type="NCBI Taxonomy" id="8030"/>
    <lineage>
        <taxon>Eukaryota</taxon>
        <taxon>Metazoa</taxon>
        <taxon>Chordata</taxon>
        <taxon>Craniata</taxon>
        <taxon>Vertebrata</taxon>
        <taxon>Euteleostomi</taxon>
        <taxon>Actinopterygii</taxon>
        <taxon>Neopterygii</taxon>
        <taxon>Teleostei</taxon>
        <taxon>Protacanthopterygii</taxon>
        <taxon>Salmoniformes</taxon>
        <taxon>Salmonidae</taxon>
        <taxon>Salmoninae</taxon>
        <taxon>Salmo</taxon>
    </lineage>
</organism>
<accession>P27007</accession>
<name>APOA1_SALSA</name>
<comment type="function">
    <text evidence="1">Participates in the reverse transport of cholesterol from tissues to the liver for excretion by promoting cholesterol efflux from tissues and by acting as a cofactor for the lecithin cholesterol acyltransferase (LCAT).</text>
</comment>
<comment type="subcellular location">
    <subcellularLocation>
        <location>Secreted</location>
    </subcellularLocation>
</comment>
<comment type="tissue specificity">
    <text>Major protein of plasma HDL, also found in chylomicrons. Expressed in liver, intestine and muscle.</text>
</comment>
<comment type="similarity">
    <text evidence="4">Belongs to the apolipoprotein A1/A4/E family.</text>
</comment>
<proteinExistence type="evidence at transcript level"/>
<reference key="1">
    <citation type="journal article" date="1991" name="Gene">
        <title>The salmon gene encoding apolipoprotein A-I: cDNA sequence, tissue expression and evolution.</title>
        <authorList>
            <person name="Powell R."/>
            <person name="Higgins D.G."/>
            <person name="Wolff J."/>
            <person name="Byrnes L."/>
            <person name="Stack M."/>
            <person name="Sharp P.M."/>
            <person name="Gannon F."/>
        </authorList>
    </citation>
    <scope>NUCLEOTIDE SEQUENCE [MRNA]</scope>
    <source>
        <tissue>Liver</tissue>
    </source>
</reference>
<protein>
    <recommendedName>
        <fullName>Apolipoprotein A-I</fullName>
        <shortName>Apo-AI</shortName>
        <shortName>ApoA-I</shortName>
    </recommendedName>
    <alternativeName>
        <fullName>Apolipoprotein A1</fullName>
    </alternativeName>
    <component>
        <recommendedName>
            <fullName>Proapolipoprotein A-I</fullName>
            <shortName>ProapoA-I</shortName>
        </recommendedName>
    </component>
</protein>
<feature type="signal peptide" evidence="2">
    <location>
        <begin position="1"/>
        <end position="18"/>
    </location>
</feature>
<feature type="chain" id="PRO_0000425346" description="Proapolipoprotein A-I">
    <location>
        <begin position="19"/>
        <end position="258"/>
    </location>
</feature>
<feature type="chain" id="PRO_0000001970" description="Apolipoprotein A-I">
    <location>
        <begin position="32"/>
        <end position="258"/>
    </location>
</feature>
<feature type="repeat" description="1">
    <location>
        <begin position="64"/>
        <end position="85"/>
    </location>
</feature>
<feature type="repeat" description="2">
    <location>
        <begin position="86"/>
        <end position="106"/>
    </location>
</feature>
<feature type="repeat" description="3; half-length">
    <location>
        <begin position="107"/>
        <end position="117"/>
    </location>
</feature>
<feature type="repeat" description="4">
    <location>
        <begin position="118"/>
        <end position="139"/>
    </location>
</feature>
<feature type="repeat" description="5">
    <location>
        <begin position="140"/>
        <end position="161"/>
    </location>
</feature>
<feature type="repeat" description="6">
    <location>
        <begin position="162"/>
        <end position="183"/>
    </location>
</feature>
<feature type="repeat" description="7">
    <location>
        <begin position="184"/>
        <end position="205"/>
    </location>
</feature>
<feature type="repeat" description="8">
    <location>
        <begin position="206"/>
        <end position="227"/>
    </location>
</feature>
<feature type="repeat" description="9">
    <location>
        <begin position="228"/>
        <end position="238"/>
    </location>
</feature>
<feature type="repeat" description="10">
    <location>
        <begin position="239"/>
        <end position="258"/>
    </location>
</feature>
<feature type="region of interest" description="3 X approximate tandem repeats">
    <location>
        <begin position="32"/>
        <end position="63"/>
    </location>
</feature>
<feature type="region of interest" description="10 X approximate tandem repeats">
    <location>
        <begin position="64"/>
        <end position="258"/>
    </location>
</feature>
<feature type="region of interest" description="Disordered" evidence="3">
    <location>
        <begin position="233"/>
        <end position="258"/>
    </location>
</feature>
<feature type="compositionally biased region" description="Polar residues" evidence="3">
    <location>
        <begin position="246"/>
        <end position="258"/>
    </location>
</feature>
<sequence length="258" mass="29448">MKFLVLALTILLAAGTQAFPMQADAPSQLEHVKAALNMYIAQVKLTAQRSIDLLDDTEYKEYKMQLSQSLDNLQQFADSTSKSWPPTPRSSAPSCDATATVRAEVMKDVEDVRTQLEPKRAELTEVLNKHIDEYRKKLEPLIKQHIELRRTEMDAFRAKIDPVVEEMRAKVAVNVEETKTKLMPIVEIVRAKLTERLEELRTLAAPYAEEYKEQMFKAVGEVREKVAPLSEDFKARWAPPPRRPSKSSWLSTRPSARP</sequence>
<dbReference type="EMBL" id="X52237">
    <property type="protein sequence ID" value="CAA36482.1"/>
    <property type="molecule type" value="mRNA"/>
</dbReference>
<dbReference type="PIR" id="JH0472">
    <property type="entry name" value="JH0472"/>
</dbReference>
<dbReference type="RefSeq" id="NP_001117135.1">
    <property type="nucleotide sequence ID" value="NM_001123663.1"/>
</dbReference>
<dbReference type="SMR" id="P27007"/>
<dbReference type="GeneID" id="100136573"/>
<dbReference type="KEGG" id="sasa:100136573"/>
<dbReference type="Proteomes" id="UP000087266">
    <property type="component" value="Chromosome ssa20"/>
</dbReference>
<dbReference type="GO" id="GO:0042627">
    <property type="term" value="C:chylomicron"/>
    <property type="evidence" value="ECO:0007669"/>
    <property type="project" value="TreeGrafter"/>
</dbReference>
<dbReference type="GO" id="GO:1903561">
    <property type="term" value="C:extracellular vesicle"/>
    <property type="evidence" value="ECO:0007669"/>
    <property type="project" value="TreeGrafter"/>
</dbReference>
<dbReference type="GO" id="GO:0034364">
    <property type="term" value="C:high-density lipoprotein particle"/>
    <property type="evidence" value="ECO:0007669"/>
    <property type="project" value="UniProtKB-KW"/>
</dbReference>
<dbReference type="GO" id="GO:0034362">
    <property type="term" value="C:low-density lipoprotein particle"/>
    <property type="evidence" value="ECO:0007669"/>
    <property type="project" value="TreeGrafter"/>
</dbReference>
<dbReference type="GO" id="GO:0034361">
    <property type="term" value="C:very-low-density lipoprotein particle"/>
    <property type="evidence" value="ECO:0007669"/>
    <property type="project" value="TreeGrafter"/>
</dbReference>
<dbReference type="GO" id="GO:0120020">
    <property type="term" value="F:cholesterol transfer activity"/>
    <property type="evidence" value="ECO:0007669"/>
    <property type="project" value="TreeGrafter"/>
</dbReference>
<dbReference type="GO" id="GO:0060228">
    <property type="term" value="F:phosphatidylcholine-sterol O-acyltransferase activator activity"/>
    <property type="evidence" value="ECO:0007669"/>
    <property type="project" value="TreeGrafter"/>
</dbReference>
<dbReference type="GO" id="GO:0005543">
    <property type="term" value="F:phospholipid binding"/>
    <property type="evidence" value="ECO:0007669"/>
    <property type="project" value="TreeGrafter"/>
</dbReference>
<dbReference type="GO" id="GO:0055090">
    <property type="term" value="P:acylglycerol homeostasis"/>
    <property type="evidence" value="ECO:0007669"/>
    <property type="project" value="TreeGrafter"/>
</dbReference>
<dbReference type="GO" id="GO:0033344">
    <property type="term" value="P:cholesterol efflux"/>
    <property type="evidence" value="ECO:0007669"/>
    <property type="project" value="TreeGrafter"/>
</dbReference>
<dbReference type="GO" id="GO:0008203">
    <property type="term" value="P:cholesterol metabolic process"/>
    <property type="evidence" value="ECO:0007669"/>
    <property type="project" value="UniProtKB-KW"/>
</dbReference>
<dbReference type="GO" id="GO:0042157">
    <property type="term" value="P:lipoprotein metabolic process"/>
    <property type="evidence" value="ECO:0007669"/>
    <property type="project" value="InterPro"/>
</dbReference>
<dbReference type="GO" id="GO:0033700">
    <property type="term" value="P:phospholipid efflux"/>
    <property type="evidence" value="ECO:0007669"/>
    <property type="project" value="TreeGrafter"/>
</dbReference>
<dbReference type="Gene3D" id="1.20.120.20">
    <property type="entry name" value="Apolipoprotein"/>
    <property type="match status" value="2"/>
</dbReference>
<dbReference type="InterPro" id="IPR000074">
    <property type="entry name" value="ApoA_E"/>
</dbReference>
<dbReference type="InterPro" id="IPR050163">
    <property type="entry name" value="Apolipoprotein_A1/A4/E"/>
</dbReference>
<dbReference type="PANTHER" id="PTHR18976">
    <property type="entry name" value="APOLIPOPROTEIN"/>
    <property type="match status" value="1"/>
</dbReference>
<dbReference type="PANTHER" id="PTHR18976:SF11">
    <property type="entry name" value="APOLIPOPROTEIN A-I"/>
    <property type="match status" value="1"/>
</dbReference>
<dbReference type="Pfam" id="PF01442">
    <property type="entry name" value="Apolipoprotein"/>
    <property type="match status" value="1"/>
</dbReference>
<dbReference type="SUPFAM" id="SSF58113">
    <property type="entry name" value="Apolipoprotein A-I"/>
    <property type="match status" value="1"/>
</dbReference>
<keyword id="KW-0153">Cholesterol metabolism</keyword>
<keyword id="KW-0345">HDL</keyword>
<keyword id="KW-0443">Lipid metabolism</keyword>
<keyword id="KW-0445">Lipid transport</keyword>
<keyword id="KW-1185">Reference proteome</keyword>
<keyword id="KW-0677">Repeat</keyword>
<keyword id="KW-0964">Secreted</keyword>
<keyword id="KW-0732">Signal</keyword>
<keyword id="KW-0753">Steroid metabolism</keyword>
<keyword id="KW-1207">Sterol metabolism</keyword>
<keyword id="KW-0813">Transport</keyword>
<gene>
    <name type="primary">apoa1</name>
</gene>